<comment type="similarity">
    <text evidence="1">Belongs to the UPF0235 family.</text>
</comment>
<gene>
    <name type="ordered locus">APL_1380</name>
</gene>
<accession>A3N228</accession>
<dbReference type="EMBL" id="CP000569">
    <property type="protein sequence ID" value="ABN74464.1"/>
    <property type="molecule type" value="Genomic_DNA"/>
</dbReference>
<dbReference type="SMR" id="A3N228"/>
<dbReference type="STRING" id="416269.APL_1380"/>
<dbReference type="EnsemblBacteria" id="ABN74464">
    <property type="protein sequence ID" value="ABN74464"/>
    <property type="gene ID" value="APL_1380"/>
</dbReference>
<dbReference type="KEGG" id="apl:APL_1380"/>
<dbReference type="eggNOG" id="COG1872">
    <property type="taxonomic scope" value="Bacteria"/>
</dbReference>
<dbReference type="HOGENOM" id="CLU_130694_5_0_6"/>
<dbReference type="Proteomes" id="UP000001432">
    <property type="component" value="Chromosome"/>
</dbReference>
<dbReference type="GO" id="GO:0005737">
    <property type="term" value="C:cytoplasm"/>
    <property type="evidence" value="ECO:0007669"/>
    <property type="project" value="TreeGrafter"/>
</dbReference>
<dbReference type="Gene3D" id="3.30.1200.10">
    <property type="entry name" value="YggU-like"/>
    <property type="match status" value="1"/>
</dbReference>
<dbReference type="HAMAP" id="MF_00634">
    <property type="entry name" value="UPF0235"/>
    <property type="match status" value="1"/>
</dbReference>
<dbReference type="InterPro" id="IPR003746">
    <property type="entry name" value="DUF167"/>
</dbReference>
<dbReference type="InterPro" id="IPR036591">
    <property type="entry name" value="YggU-like_sf"/>
</dbReference>
<dbReference type="NCBIfam" id="TIGR00251">
    <property type="entry name" value="DUF167 family protein"/>
    <property type="match status" value="1"/>
</dbReference>
<dbReference type="NCBIfam" id="NF003466">
    <property type="entry name" value="PRK05090.1"/>
    <property type="match status" value="1"/>
</dbReference>
<dbReference type="PANTHER" id="PTHR13420">
    <property type="entry name" value="UPF0235 PROTEIN C15ORF40"/>
    <property type="match status" value="1"/>
</dbReference>
<dbReference type="PANTHER" id="PTHR13420:SF7">
    <property type="entry name" value="UPF0235 PROTEIN C15ORF40"/>
    <property type="match status" value="1"/>
</dbReference>
<dbReference type="Pfam" id="PF02594">
    <property type="entry name" value="DUF167"/>
    <property type="match status" value="1"/>
</dbReference>
<dbReference type="SMART" id="SM01152">
    <property type="entry name" value="DUF167"/>
    <property type="match status" value="1"/>
</dbReference>
<dbReference type="SUPFAM" id="SSF69786">
    <property type="entry name" value="YggU-like"/>
    <property type="match status" value="1"/>
</dbReference>
<sequence>MEAVERIENPCGIRLRIFLQPKASRDQIVGLHDNELKIAITALPVDGAANAHLLKYLSKLFKVPKSSIVLEKGELQRHKQLFVPEPKLIPKEIEALL</sequence>
<organism>
    <name type="scientific">Actinobacillus pleuropneumoniae serotype 5b (strain L20)</name>
    <dbReference type="NCBI Taxonomy" id="416269"/>
    <lineage>
        <taxon>Bacteria</taxon>
        <taxon>Pseudomonadati</taxon>
        <taxon>Pseudomonadota</taxon>
        <taxon>Gammaproteobacteria</taxon>
        <taxon>Pasteurellales</taxon>
        <taxon>Pasteurellaceae</taxon>
        <taxon>Actinobacillus</taxon>
    </lineage>
</organism>
<evidence type="ECO:0000255" key="1">
    <source>
        <dbReference type="HAMAP-Rule" id="MF_00634"/>
    </source>
</evidence>
<keyword id="KW-1185">Reference proteome</keyword>
<reference key="1">
    <citation type="journal article" date="2008" name="J. Bacteriol.">
        <title>The complete genome sequence of Actinobacillus pleuropneumoniae L20 (serotype 5b).</title>
        <authorList>
            <person name="Foote S.J."/>
            <person name="Bosse J.T."/>
            <person name="Bouevitch A.B."/>
            <person name="Langford P.R."/>
            <person name="Young N.M."/>
            <person name="Nash J.H.E."/>
        </authorList>
    </citation>
    <scope>NUCLEOTIDE SEQUENCE [LARGE SCALE GENOMIC DNA]</scope>
    <source>
        <strain>L20</strain>
    </source>
</reference>
<feature type="chain" id="PRO_1000056755" description="UPF0235 protein APL_1380">
    <location>
        <begin position="1"/>
        <end position="97"/>
    </location>
</feature>
<protein>
    <recommendedName>
        <fullName evidence="1">UPF0235 protein APL_1380</fullName>
    </recommendedName>
</protein>
<name>Y1380_ACTP2</name>
<proteinExistence type="inferred from homology"/>